<proteinExistence type="inferred from homology"/>
<sequence length="127" mass="14743">MPKEFSRSQRVAEQVRRELAELIRLEVKDPRVGFITLTDVEITPDYAHAKVFFTSMKGEEGLDEILTGLHRASGFLRRELGKRVRIHTLPELHFHYDSSVERGSRMSQLIDQVVRDDDARHKDDPES</sequence>
<dbReference type="EMBL" id="CR555306">
    <property type="protein sequence ID" value="CAI09444.1"/>
    <property type="molecule type" value="Genomic_DNA"/>
</dbReference>
<dbReference type="RefSeq" id="WP_011239107.1">
    <property type="nucleotide sequence ID" value="NC_006513.1"/>
</dbReference>
<dbReference type="SMR" id="Q5NZS0"/>
<dbReference type="STRING" id="76114.ebA5842"/>
<dbReference type="KEGG" id="eba:ebA5842"/>
<dbReference type="eggNOG" id="COG0858">
    <property type="taxonomic scope" value="Bacteria"/>
</dbReference>
<dbReference type="HOGENOM" id="CLU_089475_5_0_4"/>
<dbReference type="OrthoDB" id="307788at2"/>
<dbReference type="Proteomes" id="UP000006552">
    <property type="component" value="Chromosome"/>
</dbReference>
<dbReference type="GO" id="GO:0005829">
    <property type="term" value="C:cytosol"/>
    <property type="evidence" value="ECO:0007669"/>
    <property type="project" value="TreeGrafter"/>
</dbReference>
<dbReference type="GO" id="GO:0043024">
    <property type="term" value="F:ribosomal small subunit binding"/>
    <property type="evidence" value="ECO:0007669"/>
    <property type="project" value="TreeGrafter"/>
</dbReference>
<dbReference type="GO" id="GO:0030490">
    <property type="term" value="P:maturation of SSU-rRNA"/>
    <property type="evidence" value="ECO:0007669"/>
    <property type="project" value="UniProtKB-UniRule"/>
</dbReference>
<dbReference type="Gene3D" id="3.30.300.20">
    <property type="match status" value="1"/>
</dbReference>
<dbReference type="HAMAP" id="MF_00003">
    <property type="entry name" value="RbfA"/>
    <property type="match status" value="1"/>
</dbReference>
<dbReference type="InterPro" id="IPR015946">
    <property type="entry name" value="KH_dom-like_a/b"/>
</dbReference>
<dbReference type="InterPro" id="IPR000238">
    <property type="entry name" value="RbfA"/>
</dbReference>
<dbReference type="InterPro" id="IPR023799">
    <property type="entry name" value="RbfA_dom_sf"/>
</dbReference>
<dbReference type="NCBIfam" id="TIGR00082">
    <property type="entry name" value="rbfA"/>
    <property type="match status" value="1"/>
</dbReference>
<dbReference type="PANTHER" id="PTHR33515">
    <property type="entry name" value="RIBOSOME-BINDING FACTOR A, CHLOROPLASTIC-RELATED"/>
    <property type="match status" value="1"/>
</dbReference>
<dbReference type="PANTHER" id="PTHR33515:SF1">
    <property type="entry name" value="RIBOSOME-BINDING FACTOR A, CHLOROPLASTIC-RELATED"/>
    <property type="match status" value="1"/>
</dbReference>
<dbReference type="Pfam" id="PF02033">
    <property type="entry name" value="RBFA"/>
    <property type="match status" value="1"/>
</dbReference>
<dbReference type="SUPFAM" id="SSF89919">
    <property type="entry name" value="Ribosome-binding factor A, RbfA"/>
    <property type="match status" value="1"/>
</dbReference>
<keyword id="KW-0963">Cytoplasm</keyword>
<keyword id="KW-1185">Reference proteome</keyword>
<keyword id="KW-0690">Ribosome biogenesis</keyword>
<feature type="chain" id="PRO_0000102612" description="Ribosome-binding factor A">
    <location>
        <begin position="1"/>
        <end position="127"/>
    </location>
</feature>
<name>RBFA_AROAE</name>
<evidence type="ECO:0000255" key="1">
    <source>
        <dbReference type="HAMAP-Rule" id="MF_00003"/>
    </source>
</evidence>
<reference key="1">
    <citation type="journal article" date="2005" name="Arch. Microbiol.">
        <title>The genome sequence of an anaerobic aromatic-degrading denitrifying bacterium, strain EbN1.</title>
        <authorList>
            <person name="Rabus R."/>
            <person name="Kube M."/>
            <person name="Heider J."/>
            <person name="Beck A."/>
            <person name="Heitmann K."/>
            <person name="Widdel F."/>
            <person name="Reinhardt R."/>
        </authorList>
    </citation>
    <scope>NUCLEOTIDE SEQUENCE [LARGE SCALE GENOMIC DNA]</scope>
    <source>
        <strain>DSM 19018 / LMG 30748 / EbN1</strain>
    </source>
</reference>
<protein>
    <recommendedName>
        <fullName evidence="1">Ribosome-binding factor A</fullName>
    </recommendedName>
</protein>
<gene>
    <name evidence="1" type="primary">rbfA</name>
    <name type="ordered locus">AZOSEA33190</name>
    <name type="ORF">ebA5842</name>
</gene>
<comment type="function">
    <text evidence="1">One of several proteins that assist in the late maturation steps of the functional core of the 30S ribosomal subunit. Associates with free 30S ribosomal subunits (but not with 30S subunits that are part of 70S ribosomes or polysomes). Required for efficient processing of 16S rRNA. May interact with the 5'-terminal helix region of 16S rRNA.</text>
</comment>
<comment type="subunit">
    <text evidence="1">Monomer. Binds 30S ribosomal subunits, but not 50S ribosomal subunits or 70S ribosomes.</text>
</comment>
<comment type="subcellular location">
    <subcellularLocation>
        <location evidence="1">Cytoplasm</location>
    </subcellularLocation>
</comment>
<comment type="similarity">
    <text evidence="1">Belongs to the RbfA family.</text>
</comment>
<accession>Q5NZS0</accession>
<organism>
    <name type="scientific">Aromatoleum aromaticum (strain DSM 19018 / LMG 30748 / EbN1)</name>
    <name type="common">Azoarcus sp. (strain EbN1)</name>
    <dbReference type="NCBI Taxonomy" id="76114"/>
    <lineage>
        <taxon>Bacteria</taxon>
        <taxon>Pseudomonadati</taxon>
        <taxon>Pseudomonadota</taxon>
        <taxon>Betaproteobacteria</taxon>
        <taxon>Rhodocyclales</taxon>
        <taxon>Rhodocyclaceae</taxon>
        <taxon>Aromatoleum</taxon>
    </lineage>
</organism>